<protein>
    <recommendedName>
        <fullName>Transcriptional activator protein</fullName>
        <shortName>TrAP</shortName>
    </recommendedName>
    <alternativeName>
        <fullName>Protein C2</fullName>
    </alternativeName>
    <alternativeName>
        <fullName>Protein L2</fullName>
    </alternativeName>
</protein>
<dbReference type="EMBL" id="Z25751">
    <property type="protein sequence ID" value="CAA81027.1"/>
    <property type="molecule type" value="Genomic_DNA"/>
</dbReference>
<dbReference type="PIR" id="S39212">
    <property type="entry name" value="S39212"/>
</dbReference>
<dbReference type="SMR" id="P38610"/>
<dbReference type="Proteomes" id="UP000008265">
    <property type="component" value="Genome"/>
</dbReference>
<dbReference type="GO" id="GO:0030430">
    <property type="term" value="C:host cell cytoplasm"/>
    <property type="evidence" value="ECO:0007669"/>
    <property type="project" value="UniProtKB-SubCell"/>
</dbReference>
<dbReference type="GO" id="GO:0042025">
    <property type="term" value="C:host cell nucleus"/>
    <property type="evidence" value="ECO:0007669"/>
    <property type="project" value="UniProtKB-SubCell"/>
</dbReference>
<dbReference type="GO" id="GO:0019028">
    <property type="term" value="C:viral capsid"/>
    <property type="evidence" value="ECO:0007669"/>
    <property type="project" value="InterPro"/>
</dbReference>
<dbReference type="GO" id="GO:0003677">
    <property type="term" value="F:DNA binding"/>
    <property type="evidence" value="ECO:0007669"/>
    <property type="project" value="UniProtKB-KW"/>
</dbReference>
<dbReference type="GO" id="GO:0005198">
    <property type="term" value="F:structural molecule activity"/>
    <property type="evidence" value="ECO:0007669"/>
    <property type="project" value="InterPro"/>
</dbReference>
<dbReference type="GO" id="GO:0008270">
    <property type="term" value="F:zinc ion binding"/>
    <property type="evidence" value="ECO:0007669"/>
    <property type="project" value="UniProtKB-KW"/>
</dbReference>
<dbReference type="GO" id="GO:0052170">
    <property type="term" value="P:symbiont-mediated suppression of host innate immune response"/>
    <property type="evidence" value="ECO:0007669"/>
    <property type="project" value="UniProtKB-KW"/>
</dbReference>
<dbReference type="InterPro" id="IPR000942">
    <property type="entry name" value="Gemini_AL2"/>
</dbReference>
<dbReference type="Pfam" id="PF01440">
    <property type="entry name" value="Gemini_AL2"/>
    <property type="match status" value="1"/>
</dbReference>
<dbReference type="PRINTS" id="PR00230">
    <property type="entry name" value="GEMCOATAL2"/>
</dbReference>
<gene>
    <name type="ORF">C2</name>
    <name type="ORF">L2</name>
</gene>
<organism>
    <name type="scientific">Tomato yellow leaf curl Sardinia virus (isolate Spain-1)</name>
    <name type="common">TYLCSV</name>
    <dbReference type="NCBI Taxonomy" id="37139"/>
    <lineage>
        <taxon>Viruses</taxon>
        <taxon>Monodnaviria</taxon>
        <taxon>Shotokuvirae</taxon>
        <taxon>Cressdnaviricota</taxon>
        <taxon>Repensiviricetes</taxon>
        <taxon>Geplafuvirales</taxon>
        <taxon>Geminiviridae</taxon>
        <taxon>Begomovirus</taxon>
        <taxon>Tomato yellow leaf curl virus</taxon>
    </lineage>
</organism>
<sequence>MQSSSPSTSHCSQIPIKIQHHIAKKRQVRRRRVDLDCGCSYYIHLDCINHGFTHRGVHHCASSNEWRLYLRDNKSPIFHDNQTQPTTIQQQIQFPNISNQVQPQLEEGTGDSQMFSQLPHLDDLTVSDWSFFKSL</sequence>
<reference key="1">
    <citation type="journal article" date="1994" name="Arch. Virol.">
        <title>High similarity among the tomato yellow leaf curl virus isolates from the west Mediterranean basin: the nucleotide sequence of an infectious clone from Spain.</title>
        <authorList>
            <person name="Noris E."/>
            <person name="Hidalgo E."/>
            <person name="Accotto G.P."/>
            <person name="Moriones E."/>
        </authorList>
    </citation>
    <scope>NUCLEOTIDE SEQUENCE [GENOMIC DNA]</scope>
</reference>
<reference key="2">
    <citation type="journal article" date="2016" name="Plants (Basel)">
        <title>The C2 Protein from the Geminivirus Tomato Yellow Leaf Curl Sardinia Virus Decreases Sensitivity to Jasmonates and Suppresses Jasmonate-Mediated Defences.</title>
        <authorList>
            <person name="Rosas-Diaz T."/>
            <person name="Macho A.P."/>
            <person name="Beuzon C.R."/>
            <person name="Lozano-Duran R."/>
            <person name="Bejarano E.R."/>
        </authorList>
    </citation>
    <scope>FUNCTION</scope>
</reference>
<evidence type="ECO:0000250" key="1"/>
<evidence type="ECO:0000250" key="2">
    <source>
        <dbReference type="UniProtKB" id="P27262"/>
    </source>
</evidence>
<evidence type="ECO:0000250" key="3">
    <source>
        <dbReference type="UniProtKB" id="Q91J26"/>
    </source>
</evidence>
<evidence type="ECO:0000250" key="4">
    <source>
        <dbReference type="UniProtKB" id="Q9DXE6"/>
    </source>
</evidence>
<evidence type="ECO:0000305" key="5"/>
<keyword id="KW-0010">Activator</keyword>
<keyword id="KW-0238">DNA-binding</keyword>
<keyword id="KW-1035">Host cytoplasm</keyword>
<keyword id="KW-1048">Host nucleus</keyword>
<keyword id="KW-0945">Host-virus interaction</keyword>
<keyword id="KW-1090">Inhibition of host innate immune response by virus</keyword>
<keyword id="KW-0479">Metal-binding</keyword>
<keyword id="KW-0597">Phosphoprotein</keyword>
<keyword id="KW-0941">Suppressor of RNA silencing</keyword>
<keyword id="KW-0899">Viral immunoevasion</keyword>
<keyword id="KW-0862">Zinc</keyword>
<keyword id="KW-0863">Zinc-finger</keyword>
<proteinExistence type="inferred from homology"/>
<organismHost>
    <name type="scientific">Cynanchum acutum</name>
    <dbReference type="NCBI Taxonomy" id="185024"/>
</organismHost>
<organismHost>
    <name type="scientific">Solanum lycopersicum</name>
    <name type="common">Tomato</name>
    <name type="synonym">Lycopersicon esculentum</name>
    <dbReference type="NCBI Taxonomy" id="4081"/>
</organismHost>
<organismHost>
    <name type="scientific">Solanum nigrum</name>
    <name type="common">Black nightshade</name>
    <dbReference type="NCBI Taxonomy" id="4112"/>
</organismHost>
<accession>P38610</accession>
<comment type="function">
    <text evidence="3">Multifunctional protein that modulates host antiviral defenses and promotes host attractiveness to insect vectors. Acts as a suppressor of RNA-mediated gene silencing, also known as post-transcriptional gene silencing (PTGS), a mechanism of plant viral defense that limits the accumulation of viral RNAs. TrAP suppresses the host RNA silencing by inhibiting adenosine kinase 2 (ADK2), a kinase involved in a general methylation pathway. Also suppresses the host basal defense by interacting with and inhibiting SNF1 kinase, a key regulator of cell metabolism implicated in innate antiviral defense.</text>
</comment>
<comment type="function">
    <text evidence="2">Inhibits signal transduction by the phytohormone jasmonate, making the infected plant more attractive to aphids, which are the second host to play a role as a dissemination vector. Acts by binding to ubiquitin precursor RPS27A, thereby preventing ubiquitin degradation of JAZ.</text>
</comment>
<comment type="subunit">
    <text evidence="3">Monomer. Homodimer. Homooligomer. Self-interaction correlates with nuclear localization and efficient activation of transcription. Monomers suppress local silencing by interacting with and inactivating host adenosine kinase 2 (ADK2) in the cytoplasm. Interacts with and inhibits host SNF1 kinase. Binds to ssDNA. May interact with host RPS27A.</text>
</comment>
<comment type="subcellular location">
    <subcellularLocation>
        <location evidence="3">Host nucleus</location>
    </subcellularLocation>
    <subcellularLocation>
        <location evidence="3">Host cytoplasm</location>
    </subcellularLocation>
    <text evidence="3">The phosphorylated form appears to accumulate almost exclusively in the nucleus, whereas the non-phosphorylated form is found in both nucleus and cytoplasm.</text>
</comment>
<comment type="domain">
    <text evidence="4">The zinc finger and the transactivation region are involved in PTGS suppression.</text>
</comment>
<comment type="PTM">
    <text evidence="3">Phosphorylated.</text>
</comment>
<comment type="similarity">
    <text evidence="5">Belongs to the geminiviridae transcriptional activator protein family.</text>
</comment>
<feature type="chain" id="PRO_0000222235" description="Transcriptional activator protein">
    <location>
        <begin position="1"/>
        <end position="135"/>
    </location>
</feature>
<feature type="zinc finger region" evidence="1">
    <location>
        <begin position="37"/>
        <end position="54"/>
    </location>
</feature>
<feature type="region of interest" description="Transactivation" evidence="1">
    <location>
        <begin position="120"/>
        <end position="135"/>
    </location>
</feature>
<feature type="short sequence motif" description="Nuclear localization signal" evidence="1">
    <location>
        <begin position="17"/>
        <end position="32"/>
    </location>
</feature>
<name>TRAP_TYCS1</name>